<keyword id="KW-0007">Acetylation</keyword>
<keyword id="KW-0106">Calcium</keyword>
<keyword id="KW-0479">Metal-binding</keyword>
<keyword id="KW-0488">Methylation</keyword>
<keyword id="KW-1185">Reference proteome</keyword>
<keyword id="KW-0677">Repeat</keyword>
<organism>
    <name type="scientific">Oryza sativa subsp. indica</name>
    <name type="common">Rice</name>
    <dbReference type="NCBI Taxonomy" id="39946"/>
    <lineage>
        <taxon>Eukaryota</taxon>
        <taxon>Viridiplantae</taxon>
        <taxon>Streptophyta</taxon>
        <taxon>Embryophyta</taxon>
        <taxon>Tracheophyta</taxon>
        <taxon>Spermatophyta</taxon>
        <taxon>Magnoliopsida</taxon>
        <taxon>Liliopsida</taxon>
        <taxon>Poales</taxon>
        <taxon>Poaceae</taxon>
        <taxon>BOP clade</taxon>
        <taxon>Oryzoideae</taxon>
        <taxon>Oryzeae</taxon>
        <taxon>Oryzinae</taxon>
        <taxon>Oryza</taxon>
        <taxon>Oryza sativa</taxon>
    </lineage>
</organism>
<feature type="initiator methionine" description="Removed" evidence="1">
    <location>
        <position position="1"/>
    </location>
</feature>
<feature type="chain" id="PRO_0000293082" description="Calmodulin-3">
    <location>
        <begin position="2"/>
        <end position="149"/>
    </location>
</feature>
<feature type="domain" description="EF-hand 1" evidence="2">
    <location>
        <begin position="8"/>
        <end position="43"/>
    </location>
</feature>
<feature type="domain" description="EF-hand 2" evidence="2">
    <location>
        <begin position="44"/>
        <end position="79"/>
    </location>
</feature>
<feature type="domain" description="EF-hand 3" evidence="2">
    <location>
        <begin position="81"/>
        <end position="116"/>
    </location>
</feature>
<feature type="domain" description="EF-hand 4" evidence="2">
    <location>
        <begin position="117"/>
        <end position="149"/>
    </location>
</feature>
<feature type="binding site" evidence="2">
    <location>
        <position position="21"/>
    </location>
    <ligand>
        <name>Ca(2+)</name>
        <dbReference type="ChEBI" id="CHEBI:29108"/>
        <label>1</label>
    </ligand>
</feature>
<feature type="binding site" evidence="2">
    <location>
        <position position="23"/>
    </location>
    <ligand>
        <name>Ca(2+)</name>
        <dbReference type="ChEBI" id="CHEBI:29108"/>
        <label>1</label>
    </ligand>
</feature>
<feature type="binding site" evidence="2">
    <location>
        <position position="25"/>
    </location>
    <ligand>
        <name>Ca(2+)</name>
        <dbReference type="ChEBI" id="CHEBI:29108"/>
        <label>1</label>
    </ligand>
</feature>
<feature type="binding site" evidence="2">
    <location>
        <position position="27"/>
    </location>
    <ligand>
        <name>Ca(2+)</name>
        <dbReference type="ChEBI" id="CHEBI:29108"/>
        <label>1</label>
    </ligand>
</feature>
<feature type="binding site" evidence="2">
    <location>
        <position position="32"/>
    </location>
    <ligand>
        <name>Ca(2+)</name>
        <dbReference type="ChEBI" id="CHEBI:29108"/>
        <label>1</label>
    </ligand>
</feature>
<feature type="binding site" evidence="2">
    <location>
        <position position="57"/>
    </location>
    <ligand>
        <name>Ca(2+)</name>
        <dbReference type="ChEBI" id="CHEBI:29108"/>
        <label>2</label>
    </ligand>
</feature>
<feature type="binding site" evidence="2">
    <location>
        <position position="59"/>
    </location>
    <ligand>
        <name>Ca(2+)</name>
        <dbReference type="ChEBI" id="CHEBI:29108"/>
        <label>2</label>
    </ligand>
</feature>
<feature type="binding site" evidence="2">
    <location>
        <position position="61"/>
    </location>
    <ligand>
        <name>Ca(2+)</name>
        <dbReference type="ChEBI" id="CHEBI:29108"/>
        <label>2</label>
    </ligand>
</feature>
<feature type="binding site" evidence="2">
    <location>
        <position position="63"/>
    </location>
    <ligand>
        <name>Ca(2+)</name>
        <dbReference type="ChEBI" id="CHEBI:29108"/>
        <label>2</label>
    </ligand>
</feature>
<feature type="binding site" evidence="2">
    <location>
        <position position="68"/>
    </location>
    <ligand>
        <name>Ca(2+)</name>
        <dbReference type="ChEBI" id="CHEBI:29108"/>
        <label>2</label>
    </ligand>
</feature>
<feature type="binding site" evidence="2">
    <location>
        <position position="94"/>
    </location>
    <ligand>
        <name>Ca(2+)</name>
        <dbReference type="ChEBI" id="CHEBI:29108"/>
        <label>3</label>
    </ligand>
</feature>
<feature type="binding site" evidence="2">
    <location>
        <position position="96"/>
    </location>
    <ligand>
        <name>Ca(2+)</name>
        <dbReference type="ChEBI" id="CHEBI:29108"/>
        <label>3</label>
    </ligand>
</feature>
<feature type="binding site" evidence="2">
    <location>
        <position position="98"/>
    </location>
    <ligand>
        <name>Ca(2+)</name>
        <dbReference type="ChEBI" id="CHEBI:29108"/>
        <label>3</label>
    </ligand>
</feature>
<feature type="binding site" evidence="2">
    <location>
        <position position="105"/>
    </location>
    <ligand>
        <name>Ca(2+)</name>
        <dbReference type="ChEBI" id="CHEBI:29108"/>
        <label>3</label>
    </ligand>
</feature>
<feature type="binding site" evidence="2">
    <location>
        <position position="130"/>
    </location>
    <ligand>
        <name>Ca(2+)</name>
        <dbReference type="ChEBI" id="CHEBI:29108"/>
        <label>4</label>
    </ligand>
</feature>
<feature type="binding site" evidence="2">
    <location>
        <position position="132"/>
    </location>
    <ligand>
        <name>Ca(2+)</name>
        <dbReference type="ChEBI" id="CHEBI:29108"/>
        <label>4</label>
    </ligand>
</feature>
<feature type="binding site" evidence="2">
    <location>
        <position position="134"/>
    </location>
    <ligand>
        <name>Ca(2+)</name>
        <dbReference type="ChEBI" id="CHEBI:29108"/>
        <label>4</label>
    </ligand>
</feature>
<feature type="binding site" evidence="2">
    <location>
        <position position="136"/>
    </location>
    <ligand>
        <name>Ca(2+)</name>
        <dbReference type="ChEBI" id="CHEBI:29108"/>
        <label>4</label>
    </ligand>
</feature>
<feature type="binding site" evidence="2">
    <location>
        <position position="141"/>
    </location>
    <ligand>
        <name>Ca(2+)</name>
        <dbReference type="ChEBI" id="CHEBI:29108"/>
        <label>4</label>
    </ligand>
</feature>
<feature type="modified residue" description="N-acetylalanine" evidence="1">
    <location>
        <position position="2"/>
    </location>
</feature>
<feature type="modified residue" description="N6,N6,N6-trimethyllysine" evidence="1">
    <location>
        <position position="116"/>
    </location>
</feature>
<dbReference type="EMBL" id="L18914">
    <property type="protein sequence ID" value="AAA33900.1"/>
    <property type="molecule type" value="Genomic_DNA"/>
</dbReference>
<dbReference type="EMBL" id="Z12828">
    <property type="protein sequence ID" value="CAA78288.1"/>
    <property type="molecule type" value="Genomic_DNA"/>
</dbReference>
<dbReference type="EMBL" id="CM000126">
    <property type="status" value="NOT_ANNOTATED_CDS"/>
    <property type="molecule type" value="Genomic_DNA"/>
</dbReference>
<dbReference type="PIR" id="S22860">
    <property type="entry name" value="S22860"/>
</dbReference>
<dbReference type="SMR" id="A2WNH1"/>
<dbReference type="STRING" id="39946.A2WNH1"/>
<dbReference type="EnsemblPlants" id="BGIOSGA003262-TA">
    <property type="protein sequence ID" value="BGIOSGA003262-PA"/>
    <property type="gene ID" value="BGIOSGA003262"/>
</dbReference>
<dbReference type="EnsemblPlants" id="OsGoSa_01g0012070.01">
    <property type="protein sequence ID" value="OsGoSa_01g0012070.01"/>
    <property type="gene ID" value="OsGoSa_01g0012070"/>
</dbReference>
<dbReference type="EnsemblPlants" id="OsIR64_01g0012080.01">
    <property type="protein sequence ID" value="OsIR64_01g0012080.01"/>
    <property type="gene ID" value="OsIR64_01g0012080"/>
</dbReference>
<dbReference type="EnsemblPlants" id="OsKYG_01g0012180.01">
    <property type="protein sequence ID" value="OsKYG_01g0012180.01"/>
    <property type="gene ID" value="OsKYG_01g0012180"/>
</dbReference>
<dbReference type="EnsemblPlants" id="OsLaMu_01g0012050.01">
    <property type="protein sequence ID" value="OsLaMu_01g0012050.01"/>
    <property type="gene ID" value="OsLaMu_01g0012050"/>
</dbReference>
<dbReference type="EnsemblPlants" id="OsLima_01g0012090.01">
    <property type="protein sequence ID" value="OsLima_01g0012090.01"/>
    <property type="gene ID" value="OsLima_01g0012090"/>
</dbReference>
<dbReference type="EnsemblPlants" id="OsLiXu_01g0012230.01">
    <property type="protein sequence ID" value="OsLiXu_01g0012230.01"/>
    <property type="gene ID" value="OsLiXu_01g0012230"/>
</dbReference>
<dbReference type="EnsemblPlants" id="OsMH63_01G012440_01">
    <property type="protein sequence ID" value="OsMH63_01G012440_01"/>
    <property type="gene ID" value="OsMH63_01G012440"/>
</dbReference>
<dbReference type="EnsemblPlants" id="OsPr106_01g0012150.01">
    <property type="protein sequence ID" value="OsPr106_01g0012150.01"/>
    <property type="gene ID" value="OsPr106_01g0012150"/>
</dbReference>
<dbReference type="EnsemblPlants" id="OsZS97_01G011990_01">
    <property type="protein sequence ID" value="OsZS97_01G011990_01"/>
    <property type="gene ID" value="OsZS97_01G011990"/>
</dbReference>
<dbReference type="Gramene" id="BGIOSGA003262-TA">
    <property type="protein sequence ID" value="BGIOSGA003262-PA"/>
    <property type="gene ID" value="BGIOSGA003262"/>
</dbReference>
<dbReference type="Gramene" id="OsGoSa_01g0012070.01">
    <property type="protein sequence ID" value="OsGoSa_01g0012070.01"/>
    <property type="gene ID" value="OsGoSa_01g0012070"/>
</dbReference>
<dbReference type="Gramene" id="OsIR64_01g0012080.01">
    <property type="protein sequence ID" value="OsIR64_01g0012080.01"/>
    <property type="gene ID" value="OsIR64_01g0012080"/>
</dbReference>
<dbReference type="Gramene" id="OsKYG_01g0012180.01">
    <property type="protein sequence ID" value="OsKYG_01g0012180.01"/>
    <property type="gene ID" value="OsKYG_01g0012180"/>
</dbReference>
<dbReference type="Gramene" id="OsLaMu_01g0012050.01">
    <property type="protein sequence ID" value="OsLaMu_01g0012050.01"/>
    <property type="gene ID" value="OsLaMu_01g0012050"/>
</dbReference>
<dbReference type="Gramene" id="OsLima_01g0012090.01">
    <property type="protein sequence ID" value="OsLima_01g0012090.01"/>
    <property type="gene ID" value="OsLima_01g0012090"/>
</dbReference>
<dbReference type="Gramene" id="OsLiXu_01g0012230.01">
    <property type="protein sequence ID" value="OsLiXu_01g0012230.01"/>
    <property type="gene ID" value="OsLiXu_01g0012230"/>
</dbReference>
<dbReference type="Gramene" id="OsMH63_01G012440_01">
    <property type="protein sequence ID" value="OsMH63_01G012440_01"/>
    <property type="gene ID" value="OsMH63_01G012440"/>
</dbReference>
<dbReference type="Gramene" id="OsPr106_01g0012150.01">
    <property type="protein sequence ID" value="OsPr106_01g0012150.01"/>
    <property type="gene ID" value="OsPr106_01g0012150"/>
</dbReference>
<dbReference type="Gramene" id="OsZS97_01G011990_01">
    <property type="protein sequence ID" value="OsZS97_01G011990_01"/>
    <property type="gene ID" value="OsZS97_01G011990"/>
</dbReference>
<dbReference type="HOGENOM" id="CLU_061288_2_0_1"/>
<dbReference type="OMA" id="ARKMKEC"/>
<dbReference type="OrthoDB" id="727752at2759"/>
<dbReference type="Proteomes" id="UP000007015">
    <property type="component" value="Chromosome 1"/>
</dbReference>
<dbReference type="GO" id="GO:0016460">
    <property type="term" value="C:myosin II complex"/>
    <property type="evidence" value="ECO:0007669"/>
    <property type="project" value="TreeGrafter"/>
</dbReference>
<dbReference type="GO" id="GO:0005509">
    <property type="term" value="F:calcium ion binding"/>
    <property type="evidence" value="ECO:0007669"/>
    <property type="project" value="InterPro"/>
</dbReference>
<dbReference type="CDD" id="cd00051">
    <property type="entry name" value="EFh"/>
    <property type="match status" value="2"/>
</dbReference>
<dbReference type="FunFam" id="1.10.238.10:FF:000034">
    <property type="entry name" value="Calmodulin"/>
    <property type="match status" value="1"/>
</dbReference>
<dbReference type="FunFam" id="1.10.238.10:FF:000042">
    <property type="entry name" value="Calmodulin"/>
    <property type="match status" value="1"/>
</dbReference>
<dbReference type="Gene3D" id="1.10.238.10">
    <property type="entry name" value="EF-hand"/>
    <property type="match status" value="3"/>
</dbReference>
<dbReference type="InterPro" id="IPR050230">
    <property type="entry name" value="CALM/Myosin/TropC-like"/>
</dbReference>
<dbReference type="InterPro" id="IPR011992">
    <property type="entry name" value="EF-hand-dom_pair"/>
</dbReference>
<dbReference type="InterPro" id="IPR018247">
    <property type="entry name" value="EF_Hand_1_Ca_BS"/>
</dbReference>
<dbReference type="InterPro" id="IPR002048">
    <property type="entry name" value="EF_hand_dom"/>
</dbReference>
<dbReference type="PANTHER" id="PTHR23048:SF53">
    <property type="entry name" value="CALMODULIN"/>
    <property type="match status" value="1"/>
</dbReference>
<dbReference type="PANTHER" id="PTHR23048">
    <property type="entry name" value="MYOSIN LIGHT CHAIN 1, 3"/>
    <property type="match status" value="1"/>
</dbReference>
<dbReference type="Pfam" id="PF13499">
    <property type="entry name" value="EF-hand_7"/>
    <property type="match status" value="2"/>
</dbReference>
<dbReference type="SMART" id="SM00054">
    <property type="entry name" value="EFh"/>
    <property type="match status" value="4"/>
</dbReference>
<dbReference type="SUPFAM" id="SSF47473">
    <property type="entry name" value="EF-hand"/>
    <property type="match status" value="1"/>
</dbReference>
<dbReference type="PROSITE" id="PS00018">
    <property type="entry name" value="EF_HAND_1"/>
    <property type="match status" value="4"/>
</dbReference>
<dbReference type="PROSITE" id="PS50222">
    <property type="entry name" value="EF_HAND_2"/>
    <property type="match status" value="4"/>
</dbReference>
<protein>
    <recommendedName>
        <fullName>Calmodulin-3</fullName>
        <shortName>CaM-3</shortName>
    </recommendedName>
</protein>
<comment type="function">
    <text>Calmodulin mediates the control of a large number of enzymes, ion channels and other proteins by Ca(2+). Among the enzymes to be stimulated by the calmodulin-Ca(2+) complex are a number of protein kinases and phosphatases.</text>
</comment>
<comment type="miscellaneous">
    <text>This protein has four functional calcium-binding sites.</text>
</comment>
<comment type="similarity">
    <text evidence="3">Belongs to the calmodulin family.</text>
</comment>
<sequence>MADQLTDDQIAEFKEAFSLFDKDGDGCITTKELGTVMRSLGQNPTEAELQDMINEVDADGNGTIDFPEFLNLMARKMKDTDSEEELKEAFRVFDKDQNGFISAAELRHVMTNLGEKLTDEEVDEMIREADVDGDGQINYDEFVKVMMAK</sequence>
<proteinExistence type="inferred from homology"/>
<reference key="1">
    <citation type="submission" date="1992-06" db="EMBL/GenBank/DDBJ databases">
        <title>Structural organization of monocot calmodulin genes and promoter activity in transgenic tobacco plants.</title>
        <authorList>
            <person name="Choi Y."/>
            <person name="Kim S.R."/>
            <person name="Poovaiah B.W."/>
            <person name="An G."/>
        </authorList>
    </citation>
    <scope>NUCLEOTIDE SEQUENCE [GENOMIC DNA]</scope>
    <source>
        <strain>cv. IR36</strain>
    </source>
</reference>
<reference key="2">
    <citation type="journal article" date="2005" name="PLoS Biol.">
        <title>The genomes of Oryza sativa: a history of duplications.</title>
        <authorList>
            <person name="Yu J."/>
            <person name="Wang J."/>
            <person name="Lin W."/>
            <person name="Li S."/>
            <person name="Li H."/>
            <person name="Zhou J."/>
            <person name="Ni P."/>
            <person name="Dong W."/>
            <person name="Hu S."/>
            <person name="Zeng C."/>
            <person name="Zhang J."/>
            <person name="Zhang Y."/>
            <person name="Li R."/>
            <person name="Xu Z."/>
            <person name="Li S."/>
            <person name="Li X."/>
            <person name="Zheng H."/>
            <person name="Cong L."/>
            <person name="Lin L."/>
            <person name="Yin J."/>
            <person name="Geng J."/>
            <person name="Li G."/>
            <person name="Shi J."/>
            <person name="Liu J."/>
            <person name="Lv H."/>
            <person name="Li J."/>
            <person name="Wang J."/>
            <person name="Deng Y."/>
            <person name="Ran L."/>
            <person name="Shi X."/>
            <person name="Wang X."/>
            <person name="Wu Q."/>
            <person name="Li C."/>
            <person name="Ren X."/>
            <person name="Wang J."/>
            <person name="Wang X."/>
            <person name="Li D."/>
            <person name="Liu D."/>
            <person name="Zhang X."/>
            <person name="Ji Z."/>
            <person name="Zhao W."/>
            <person name="Sun Y."/>
            <person name="Zhang Z."/>
            <person name="Bao J."/>
            <person name="Han Y."/>
            <person name="Dong L."/>
            <person name="Ji J."/>
            <person name="Chen P."/>
            <person name="Wu S."/>
            <person name="Liu J."/>
            <person name="Xiao Y."/>
            <person name="Bu D."/>
            <person name="Tan J."/>
            <person name="Yang L."/>
            <person name="Ye C."/>
            <person name="Zhang J."/>
            <person name="Xu J."/>
            <person name="Zhou Y."/>
            <person name="Yu Y."/>
            <person name="Zhang B."/>
            <person name="Zhuang S."/>
            <person name="Wei H."/>
            <person name="Liu B."/>
            <person name="Lei M."/>
            <person name="Yu H."/>
            <person name="Li Y."/>
            <person name="Xu H."/>
            <person name="Wei S."/>
            <person name="He X."/>
            <person name="Fang L."/>
            <person name="Zhang Z."/>
            <person name="Zhang Y."/>
            <person name="Huang X."/>
            <person name="Su Z."/>
            <person name="Tong W."/>
            <person name="Li J."/>
            <person name="Tong Z."/>
            <person name="Li S."/>
            <person name="Ye J."/>
            <person name="Wang L."/>
            <person name="Fang L."/>
            <person name="Lei T."/>
            <person name="Chen C.-S."/>
            <person name="Chen H.-C."/>
            <person name="Xu Z."/>
            <person name="Li H."/>
            <person name="Huang H."/>
            <person name="Zhang F."/>
            <person name="Xu H."/>
            <person name="Li N."/>
            <person name="Zhao C."/>
            <person name="Li S."/>
            <person name="Dong L."/>
            <person name="Huang Y."/>
            <person name="Li L."/>
            <person name="Xi Y."/>
            <person name="Qi Q."/>
            <person name="Li W."/>
            <person name="Zhang B."/>
            <person name="Hu W."/>
            <person name="Zhang Y."/>
            <person name="Tian X."/>
            <person name="Jiao Y."/>
            <person name="Liang X."/>
            <person name="Jin J."/>
            <person name="Gao L."/>
            <person name="Zheng W."/>
            <person name="Hao B."/>
            <person name="Liu S.-M."/>
            <person name="Wang W."/>
            <person name="Yuan L."/>
            <person name="Cao M."/>
            <person name="McDermott J."/>
            <person name="Samudrala R."/>
            <person name="Wang J."/>
            <person name="Wong G.K.-S."/>
            <person name="Yang H."/>
        </authorList>
    </citation>
    <scope>NUCLEOTIDE SEQUENCE [LARGE SCALE GENOMIC DNA]</scope>
    <source>
        <strain>cv. 93-11</strain>
    </source>
</reference>
<reference key="3">
    <citation type="journal article" date="2007" name="BMC Plant Biol.">
        <title>Genome-wide identification and analyses of the rice calmodulin and related potential calcium sensor proteins.</title>
        <authorList>
            <person name="Boonburapong B."/>
            <person name="Buaboocha T."/>
        </authorList>
    </citation>
    <scope>GENE FAMILY</scope>
    <scope>NOMENCLATURE</scope>
</reference>
<name>CALM3_ORYSI</name>
<gene>
    <name type="primary">CAM3</name>
    <name type="ORF">OsI_001364</name>
</gene>
<accession>A2WNH1</accession>
<accession>P29612</accession>
<accession>Q9SDJ0</accession>
<evidence type="ECO:0000250" key="1"/>
<evidence type="ECO:0000255" key="2">
    <source>
        <dbReference type="PROSITE-ProRule" id="PRU00448"/>
    </source>
</evidence>
<evidence type="ECO:0000305" key="3"/>